<protein>
    <recommendedName>
        <fullName evidence="1">Bifunctional protein FolD</fullName>
    </recommendedName>
    <domain>
        <recommendedName>
            <fullName evidence="1">Methylenetetrahydrofolate dehydrogenase</fullName>
            <ecNumber evidence="1">1.5.1.5</ecNumber>
        </recommendedName>
    </domain>
    <domain>
        <recommendedName>
            <fullName evidence="1">Methenyltetrahydrofolate cyclohydrolase</fullName>
            <ecNumber evidence="1">3.5.4.9</ecNumber>
        </recommendedName>
    </domain>
</protein>
<organism>
    <name type="scientific">Nitratidesulfovibrio vulgaris (strain DP4)</name>
    <name type="common">Desulfovibrio vulgaris</name>
    <dbReference type="NCBI Taxonomy" id="391774"/>
    <lineage>
        <taxon>Bacteria</taxon>
        <taxon>Pseudomonadati</taxon>
        <taxon>Thermodesulfobacteriota</taxon>
        <taxon>Desulfovibrionia</taxon>
        <taxon>Desulfovibrionales</taxon>
        <taxon>Desulfovibrionaceae</taxon>
        <taxon>Nitratidesulfovibrio</taxon>
    </lineage>
</organism>
<sequence>MQLLDGKATAATIREELRAEIAALTPRARRAPGLAVILVGEDPASQVYVRNKERACHDTGIVSEAFRLAPTTTQEELERLIADLNVRPDIDGILLQLPLPRGLDAQRCLEAIDPAKDVDGFHPQNMGRLALGLPGFRPCTPAGVMTLLERYDLSPSGRKAVVVGRSNIVGKPLALMLGAPGKYANATVTVCHSGTPDLAAECRTADFLFLAIGRPRFVTADMVREGAVVVDVGINRTETGLAGDCDFEGVSRVASAITPVPGGVGPMTIAQLLVNTVQSWKVRCGL</sequence>
<comment type="function">
    <text evidence="1">Catalyzes the oxidation of 5,10-methylenetetrahydrofolate to 5,10-methenyltetrahydrofolate and then the hydrolysis of 5,10-methenyltetrahydrofolate to 10-formyltetrahydrofolate.</text>
</comment>
<comment type="catalytic activity">
    <reaction evidence="1">
        <text>(6R)-5,10-methylene-5,6,7,8-tetrahydrofolate + NADP(+) = (6R)-5,10-methenyltetrahydrofolate + NADPH</text>
        <dbReference type="Rhea" id="RHEA:22812"/>
        <dbReference type="ChEBI" id="CHEBI:15636"/>
        <dbReference type="ChEBI" id="CHEBI:57455"/>
        <dbReference type="ChEBI" id="CHEBI:57783"/>
        <dbReference type="ChEBI" id="CHEBI:58349"/>
        <dbReference type="EC" id="1.5.1.5"/>
    </reaction>
</comment>
<comment type="catalytic activity">
    <reaction evidence="1">
        <text>(6R)-5,10-methenyltetrahydrofolate + H2O = (6R)-10-formyltetrahydrofolate + H(+)</text>
        <dbReference type="Rhea" id="RHEA:23700"/>
        <dbReference type="ChEBI" id="CHEBI:15377"/>
        <dbReference type="ChEBI" id="CHEBI:15378"/>
        <dbReference type="ChEBI" id="CHEBI:57455"/>
        <dbReference type="ChEBI" id="CHEBI:195366"/>
        <dbReference type="EC" id="3.5.4.9"/>
    </reaction>
</comment>
<comment type="pathway">
    <text evidence="1">One-carbon metabolism; tetrahydrofolate interconversion.</text>
</comment>
<comment type="subunit">
    <text evidence="1">Homodimer.</text>
</comment>
<comment type="similarity">
    <text evidence="1">Belongs to the tetrahydrofolate dehydrogenase/cyclohydrolase family.</text>
</comment>
<feature type="chain" id="PRO_0000305811" description="Bifunctional protein FolD">
    <location>
        <begin position="1"/>
        <end position="286"/>
    </location>
</feature>
<feature type="binding site" evidence="1">
    <location>
        <begin position="164"/>
        <end position="166"/>
    </location>
    <ligand>
        <name>NADP(+)</name>
        <dbReference type="ChEBI" id="CHEBI:58349"/>
    </ligand>
</feature>
<feature type="binding site" evidence="1">
    <location>
        <position position="193"/>
    </location>
    <ligand>
        <name>NADP(+)</name>
        <dbReference type="ChEBI" id="CHEBI:58349"/>
    </ligand>
</feature>
<feature type="binding site" evidence="1">
    <location>
        <position position="234"/>
    </location>
    <ligand>
        <name>NADP(+)</name>
        <dbReference type="ChEBI" id="CHEBI:58349"/>
    </ligand>
</feature>
<gene>
    <name evidence="1" type="primary">folD</name>
    <name type="ordered locus">Dvul_2658</name>
</gene>
<proteinExistence type="inferred from homology"/>
<keyword id="KW-0028">Amino-acid biosynthesis</keyword>
<keyword id="KW-0368">Histidine biosynthesis</keyword>
<keyword id="KW-0378">Hydrolase</keyword>
<keyword id="KW-0486">Methionine biosynthesis</keyword>
<keyword id="KW-0511">Multifunctional enzyme</keyword>
<keyword id="KW-0521">NADP</keyword>
<keyword id="KW-0554">One-carbon metabolism</keyword>
<keyword id="KW-0560">Oxidoreductase</keyword>
<keyword id="KW-0658">Purine biosynthesis</keyword>
<name>FOLD_NITV4</name>
<evidence type="ECO:0000255" key="1">
    <source>
        <dbReference type="HAMAP-Rule" id="MF_01576"/>
    </source>
</evidence>
<accession>A1VGV4</accession>
<reference key="1">
    <citation type="journal article" date="2009" name="Environ. Microbiol.">
        <title>Contribution of mobile genetic elements to Desulfovibrio vulgaris genome plasticity.</title>
        <authorList>
            <person name="Walker C.B."/>
            <person name="Stolyar S."/>
            <person name="Chivian D."/>
            <person name="Pinel N."/>
            <person name="Gabster J.A."/>
            <person name="Dehal P.S."/>
            <person name="He Z."/>
            <person name="Yang Z.K."/>
            <person name="Yen H.C."/>
            <person name="Zhou J."/>
            <person name="Wall J.D."/>
            <person name="Hazen T.C."/>
            <person name="Arkin A.P."/>
            <person name="Stahl D.A."/>
        </authorList>
    </citation>
    <scope>NUCLEOTIDE SEQUENCE [LARGE SCALE GENOMIC DNA]</scope>
    <source>
        <strain>DP4</strain>
    </source>
</reference>
<dbReference type="EC" id="1.5.1.5" evidence="1"/>
<dbReference type="EC" id="3.5.4.9" evidence="1"/>
<dbReference type="EMBL" id="CP000527">
    <property type="protein sequence ID" value="ABM29670.1"/>
    <property type="molecule type" value="Genomic_DNA"/>
</dbReference>
<dbReference type="RefSeq" id="WP_010937630.1">
    <property type="nucleotide sequence ID" value="NC_008751.1"/>
</dbReference>
<dbReference type="SMR" id="A1VGV4"/>
<dbReference type="KEGG" id="dvl:Dvul_2658"/>
<dbReference type="HOGENOM" id="CLU_034045_0_0_7"/>
<dbReference type="UniPathway" id="UPA00193"/>
<dbReference type="Proteomes" id="UP000009173">
    <property type="component" value="Chromosome"/>
</dbReference>
<dbReference type="GO" id="GO:0005829">
    <property type="term" value="C:cytosol"/>
    <property type="evidence" value="ECO:0007669"/>
    <property type="project" value="TreeGrafter"/>
</dbReference>
<dbReference type="GO" id="GO:0004477">
    <property type="term" value="F:methenyltetrahydrofolate cyclohydrolase activity"/>
    <property type="evidence" value="ECO:0007669"/>
    <property type="project" value="UniProtKB-UniRule"/>
</dbReference>
<dbReference type="GO" id="GO:0004488">
    <property type="term" value="F:methylenetetrahydrofolate dehydrogenase (NADP+) activity"/>
    <property type="evidence" value="ECO:0007669"/>
    <property type="project" value="UniProtKB-UniRule"/>
</dbReference>
<dbReference type="GO" id="GO:0000105">
    <property type="term" value="P:L-histidine biosynthetic process"/>
    <property type="evidence" value="ECO:0007669"/>
    <property type="project" value="UniProtKB-KW"/>
</dbReference>
<dbReference type="GO" id="GO:0009086">
    <property type="term" value="P:methionine biosynthetic process"/>
    <property type="evidence" value="ECO:0007669"/>
    <property type="project" value="UniProtKB-KW"/>
</dbReference>
<dbReference type="GO" id="GO:0006164">
    <property type="term" value="P:purine nucleotide biosynthetic process"/>
    <property type="evidence" value="ECO:0007669"/>
    <property type="project" value="UniProtKB-KW"/>
</dbReference>
<dbReference type="GO" id="GO:0035999">
    <property type="term" value="P:tetrahydrofolate interconversion"/>
    <property type="evidence" value="ECO:0007669"/>
    <property type="project" value="UniProtKB-UniRule"/>
</dbReference>
<dbReference type="CDD" id="cd01080">
    <property type="entry name" value="NAD_bind_m-THF_DH_Cyclohyd"/>
    <property type="match status" value="1"/>
</dbReference>
<dbReference type="FunFam" id="3.40.50.720:FF:000189">
    <property type="entry name" value="Bifunctional protein FolD"/>
    <property type="match status" value="1"/>
</dbReference>
<dbReference type="FunFam" id="3.40.50.10860:FF:000005">
    <property type="entry name" value="C-1-tetrahydrofolate synthase, cytoplasmic, putative"/>
    <property type="match status" value="1"/>
</dbReference>
<dbReference type="Gene3D" id="3.40.50.10860">
    <property type="entry name" value="Leucine Dehydrogenase, chain A, domain 1"/>
    <property type="match status" value="1"/>
</dbReference>
<dbReference type="Gene3D" id="3.40.50.720">
    <property type="entry name" value="NAD(P)-binding Rossmann-like Domain"/>
    <property type="match status" value="1"/>
</dbReference>
<dbReference type="HAMAP" id="MF_01576">
    <property type="entry name" value="THF_DHG_CYH"/>
    <property type="match status" value="1"/>
</dbReference>
<dbReference type="InterPro" id="IPR046346">
    <property type="entry name" value="Aminoacid_DH-like_N_sf"/>
</dbReference>
<dbReference type="InterPro" id="IPR036291">
    <property type="entry name" value="NAD(P)-bd_dom_sf"/>
</dbReference>
<dbReference type="InterPro" id="IPR000672">
    <property type="entry name" value="THF_DH/CycHdrlase"/>
</dbReference>
<dbReference type="InterPro" id="IPR020630">
    <property type="entry name" value="THF_DH/CycHdrlase_cat_dom"/>
</dbReference>
<dbReference type="InterPro" id="IPR020867">
    <property type="entry name" value="THF_DH/CycHdrlase_CS"/>
</dbReference>
<dbReference type="InterPro" id="IPR020631">
    <property type="entry name" value="THF_DH/CycHdrlase_NAD-bd_dom"/>
</dbReference>
<dbReference type="NCBIfam" id="NF008058">
    <property type="entry name" value="PRK10792.1"/>
    <property type="match status" value="1"/>
</dbReference>
<dbReference type="NCBIfam" id="NF010781">
    <property type="entry name" value="PRK14184.1"/>
    <property type="match status" value="1"/>
</dbReference>
<dbReference type="NCBIfam" id="NF010783">
    <property type="entry name" value="PRK14186.1"/>
    <property type="match status" value="1"/>
</dbReference>
<dbReference type="PANTHER" id="PTHR48099:SF5">
    <property type="entry name" value="C-1-TETRAHYDROFOLATE SYNTHASE, CYTOPLASMIC"/>
    <property type="match status" value="1"/>
</dbReference>
<dbReference type="PANTHER" id="PTHR48099">
    <property type="entry name" value="C-1-TETRAHYDROFOLATE SYNTHASE, CYTOPLASMIC-RELATED"/>
    <property type="match status" value="1"/>
</dbReference>
<dbReference type="Pfam" id="PF00763">
    <property type="entry name" value="THF_DHG_CYH"/>
    <property type="match status" value="1"/>
</dbReference>
<dbReference type="Pfam" id="PF02882">
    <property type="entry name" value="THF_DHG_CYH_C"/>
    <property type="match status" value="1"/>
</dbReference>
<dbReference type="PRINTS" id="PR00085">
    <property type="entry name" value="THFDHDRGNASE"/>
</dbReference>
<dbReference type="SUPFAM" id="SSF53223">
    <property type="entry name" value="Aminoacid dehydrogenase-like, N-terminal domain"/>
    <property type="match status" value="1"/>
</dbReference>
<dbReference type="SUPFAM" id="SSF51735">
    <property type="entry name" value="NAD(P)-binding Rossmann-fold domains"/>
    <property type="match status" value="1"/>
</dbReference>
<dbReference type="PROSITE" id="PS00767">
    <property type="entry name" value="THF_DHG_CYH_2"/>
    <property type="match status" value="1"/>
</dbReference>